<organism>
    <name type="scientific">Sus scrofa</name>
    <name type="common">Pig</name>
    <dbReference type="NCBI Taxonomy" id="9823"/>
    <lineage>
        <taxon>Eukaryota</taxon>
        <taxon>Metazoa</taxon>
        <taxon>Chordata</taxon>
        <taxon>Craniata</taxon>
        <taxon>Vertebrata</taxon>
        <taxon>Euteleostomi</taxon>
        <taxon>Mammalia</taxon>
        <taxon>Eutheria</taxon>
        <taxon>Laurasiatheria</taxon>
        <taxon>Artiodactyla</taxon>
        <taxon>Suina</taxon>
        <taxon>Suidae</taxon>
        <taxon>Sus</taxon>
    </lineage>
</organism>
<protein>
    <recommendedName>
        <fullName evidence="1">Cystic fibrosis transmembrane conductance regulator</fullName>
        <shortName>CFTR</shortName>
    </recommendedName>
    <alternativeName>
        <fullName>ATP-binding cassette sub-family C member 7</fullName>
    </alternativeName>
    <alternativeName>
        <fullName>Channel conductance-controlling ATPase</fullName>
        <ecNumber evidence="1">5.6.1.6</ecNumber>
    </alternativeName>
    <alternativeName>
        <fullName>cAMP-dependent chloride channel</fullName>
    </alternativeName>
</protein>
<feature type="chain" id="PRO_0000093426" description="Cystic fibrosis transmembrane conductance regulator">
    <location>
        <begin position="1"/>
        <end position="1482"/>
    </location>
</feature>
<feature type="topological domain" description="Cytoplasmic" evidence="1">
    <location>
        <begin position="1"/>
        <end position="77"/>
    </location>
</feature>
<feature type="transmembrane region" description="Helical; Name=1" evidence="1">
    <location>
        <begin position="78"/>
        <end position="98"/>
    </location>
</feature>
<feature type="topological domain" description="Extracellular" evidence="1">
    <location>
        <begin position="99"/>
        <end position="122"/>
    </location>
</feature>
<feature type="transmembrane region" description="Helical; Name=2" evidence="1">
    <location>
        <begin position="123"/>
        <end position="146"/>
    </location>
</feature>
<feature type="topological domain" description="Cytoplasmic" evidence="1">
    <location>
        <begin position="147"/>
        <end position="195"/>
    </location>
</feature>
<feature type="transmembrane region" description="Helical; Name=3" evidence="1">
    <location>
        <begin position="196"/>
        <end position="216"/>
    </location>
</feature>
<feature type="topological domain" description="Extracellular" evidence="1">
    <location>
        <begin position="217"/>
        <end position="222"/>
    </location>
</feature>
<feature type="transmembrane region" description="Helical; Name=4" evidence="1">
    <location>
        <begin position="223"/>
        <end position="243"/>
    </location>
</feature>
<feature type="topological domain" description="Cytoplasmic" evidence="1">
    <location>
        <begin position="244"/>
        <end position="298"/>
    </location>
</feature>
<feature type="transmembrane region" description="Helical; Name=5" evidence="1">
    <location>
        <begin position="299"/>
        <end position="319"/>
    </location>
</feature>
<feature type="topological domain" description="Extracellular" evidence="1">
    <location>
        <begin position="320"/>
        <end position="339"/>
    </location>
</feature>
<feature type="transmembrane region" description="Helical; Name=6" evidence="1">
    <location>
        <begin position="340"/>
        <end position="358"/>
    </location>
</feature>
<feature type="topological domain" description="Cytoplasmic" evidence="1">
    <location>
        <begin position="359"/>
        <end position="859"/>
    </location>
</feature>
<feature type="transmembrane region" description="Helical; Name=7" evidence="1">
    <location>
        <begin position="860"/>
        <end position="880"/>
    </location>
</feature>
<feature type="topological domain" description="Extracellular" evidence="1">
    <location>
        <begin position="881"/>
        <end position="919"/>
    </location>
</feature>
<feature type="transmembrane region" description="Discontinuously helical; Name=8" evidence="1">
    <location>
        <begin position="920"/>
        <end position="940"/>
    </location>
</feature>
<feature type="topological domain" description="Cytoplasmic" evidence="1">
    <location>
        <begin position="941"/>
        <end position="991"/>
    </location>
</feature>
<feature type="transmembrane region" description="Helical; Name=9" evidence="1">
    <location>
        <begin position="992"/>
        <end position="1012"/>
    </location>
</feature>
<feature type="topological domain" description="Extracellular" evidence="1">
    <location>
        <begin position="1013"/>
        <end position="1014"/>
    </location>
</feature>
<feature type="transmembrane region" description="Helical; Name=10" evidence="1">
    <location>
        <begin position="1015"/>
        <end position="1035"/>
    </location>
</feature>
<feature type="topological domain" description="Cytoplasmic" evidence="1">
    <location>
        <begin position="1036"/>
        <end position="1096"/>
    </location>
</feature>
<feature type="transmembrane region" description="Helical; Name=11" evidence="1">
    <location>
        <begin position="1097"/>
        <end position="1117"/>
    </location>
</feature>
<feature type="topological domain" description="Extracellular" evidence="1">
    <location>
        <begin position="1118"/>
        <end position="1131"/>
    </location>
</feature>
<feature type="transmembrane region" description="Helical; Name=12" evidence="1">
    <location>
        <begin position="1132"/>
        <end position="1152"/>
    </location>
</feature>
<feature type="topological domain" description="Cytoplasmic" evidence="1">
    <location>
        <begin position="1153"/>
        <end position="1482"/>
    </location>
</feature>
<feature type="domain" description="ABC transmembrane type-1 1" evidence="6">
    <location>
        <begin position="81"/>
        <end position="365"/>
    </location>
</feature>
<feature type="domain" description="ABC transporter 1" evidence="5">
    <location>
        <begin position="423"/>
        <end position="646"/>
    </location>
</feature>
<feature type="domain" description="ABC transmembrane type-1 2" evidence="6">
    <location>
        <begin position="860"/>
        <end position="1156"/>
    </location>
</feature>
<feature type="domain" description="ABC transporter 2" evidence="5">
    <location>
        <begin position="1212"/>
        <end position="1445"/>
    </location>
</feature>
<feature type="region of interest" description="Disordered R region" evidence="1">
    <location>
        <begin position="654"/>
        <end position="832"/>
    </location>
</feature>
<feature type="region of interest" description="Interaction with GORASP2" evidence="1">
    <location>
        <begin position="1388"/>
        <end position="1482"/>
    </location>
</feature>
<feature type="region of interest" description="Disordered" evidence="7">
    <location>
        <begin position="1454"/>
        <end position="1482"/>
    </location>
</feature>
<feature type="short sequence motif" description="PDZ-binding" evidence="1">
    <location>
        <begin position="1480"/>
        <end position="1482"/>
    </location>
</feature>
<feature type="compositionally biased region" description="Basic residues" evidence="7">
    <location>
        <begin position="1454"/>
        <end position="1464"/>
    </location>
</feature>
<feature type="compositionally biased region" description="Acidic residues" evidence="7">
    <location>
        <begin position="1472"/>
        <end position="1482"/>
    </location>
</feature>
<feature type="binding site" evidence="1">
    <location>
        <position position="401"/>
    </location>
    <ligand>
        <name>ATP</name>
        <dbReference type="ChEBI" id="CHEBI:30616"/>
        <label>1</label>
    </ligand>
</feature>
<feature type="binding site" evidence="1">
    <location>
        <position position="434"/>
    </location>
    <ligand>
        <name>ATP</name>
        <dbReference type="ChEBI" id="CHEBI:30616"/>
        <label>1</label>
    </ligand>
</feature>
<feature type="binding site" evidence="5">
    <location>
        <begin position="458"/>
        <end position="465"/>
    </location>
    <ligand>
        <name>ATP</name>
        <dbReference type="ChEBI" id="CHEBI:30616"/>
        <label>1</label>
    </ligand>
</feature>
<feature type="binding site" evidence="2">
    <location>
        <position position="493"/>
    </location>
    <ligand>
        <name>ATP</name>
        <dbReference type="ChEBI" id="CHEBI:30616"/>
        <label>1</label>
    </ligand>
</feature>
<feature type="binding site" evidence="1">
    <location>
        <position position="1221"/>
    </location>
    <ligand>
        <name>ATP</name>
        <dbReference type="ChEBI" id="CHEBI:30616"/>
        <label>2</label>
    </ligand>
</feature>
<feature type="binding site" evidence="5">
    <location>
        <begin position="1246"/>
        <end position="1253"/>
    </location>
    <ligand>
        <name>ATP</name>
        <dbReference type="ChEBI" id="CHEBI:30616"/>
        <label>2</label>
    </ligand>
</feature>
<feature type="modified residue" description="Phosphoserine" evidence="1">
    <location>
        <position position="549"/>
    </location>
</feature>
<feature type="modified residue" description="Phosphoserine" evidence="1">
    <location>
        <position position="660"/>
    </location>
</feature>
<feature type="modified residue" description="Phosphoserine; by PKA" evidence="1">
    <location>
        <position position="670"/>
    </location>
</feature>
<feature type="modified residue" description="Phosphoserine" evidence="1">
    <location>
        <position position="686"/>
    </location>
</feature>
<feature type="modified residue" description="Phosphoserine" evidence="1">
    <location>
        <position position="700"/>
    </location>
</feature>
<feature type="modified residue" description="Phosphoserine" evidence="1">
    <location>
        <position position="712"/>
    </location>
</feature>
<feature type="modified residue" description="Phosphothreonine" evidence="1">
    <location>
        <position position="717"/>
    </location>
</feature>
<feature type="modified residue" description="Phosphoserine" evidence="1">
    <location>
        <position position="737"/>
    </location>
</feature>
<feature type="modified residue" description="Phosphoserine" evidence="1">
    <location>
        <position position="768"/>
    </location>
</feature>
<feature type="modified residue" description="Phosphoserine" evidence="1">
    <location>
        <position position="791"/>
    </location>
</feature>
<feature type="modified residue" description="Phosphoserine" evidence="1">
    <location>
        <position position="796"/>
    </location>
</feature>
<feature type="modified residue" description="Phosphoserine" evidence="1">
    <location>
        <position position="814"/>
    </location>
</feature>
<feature type="modified residue" description="Phosphoserine" evidence="1">
    <location>
        <position position="1458"/>
    </location>
</feature>
<feature type="lipid moiety-binding region" description="S-palmitoyl cysteine" evidence="1">
    <location>
        <position position="524"/>
    </location>
</feature>
<feature type="lipid moiety-binding region" description="S-palmitoyl cysteine" evidence="1">
    <location>
        <position position="1397"/>
    </location>
</feature>
<feature type="glycosylation site" description="N-linked (GlcNAc...) asparagine" evidence="4">
    <location>
        <position position="895"/>
    </location>
</feature>
<feature type="glycosylation site" description="N-linked (GlcNAc...) asparagine" evidence="4">
    <location>
        <position position="901"/>
    </location>
</feature>
<feature type="cross-link" description="Glycyl lysine isopeptide (Lys-Gly) (interchain with G-Cter in ubiquitin)" evidence="1">
    <location>
        <position position="688"/>
    </location>
</feature>
<feature type="sequence conflict" description="In Ref. 2; AAR16305." evidence="9" ref="2">
    <original>P</original>
    <variation>L</variation>
    <location>
        <position position="145"/>
    </location>
</feature>
<proteinExistence type="evidence at transcript level"/>
<sequence length="1482" mass="168188">MQRSPLEKASIFSKLFFSWTRPILRKGYRQRLELSDIYHISSSDSADNLSEKLEREWDRELASKKNPKLINALRRCFFWRFMFYGIILYLGEVTKAVQPLLLGRIIASYDPDNKAERSIAIYLGVGLCLLFIVRTLLLHPAIFGPHHIGMQMRIAMFSLIYKKTLKLSSRVLDKISIGQLVSLLSNNLNKFDEGLALAHFVWIAPLQVTLLMGLLWELLQASAFCGLAFLVVLALFQAGLGKMMMKYRDQRAGKINERLVITSEMIENIQSVKAYCWEEAMEKMIENLRQTELKLTRKAAYVRYFNSSAFFFSGLFVVFLSVLPYALLKGIMLRKIFTTISFCIVLRMAVTRQFPWAVQTWYDSLGAINKIQDFLQKQEYKTLEYNLTTTEVVMENVTAFWEEGFGKLFEKAKQNNNSRKISNGDNSLFFSNFSLLGTPVLKDISFKIERGQLLAVAGSTGAGKTSLLMMIMGELEPSEGKIKHSGRISFCSQFSWIMPGTIKENIIFGVSYDEYRYRSVIKACQLEEDISKFAEKDNIVLGEGGITLSGGQRARISLARAVYKDADLYLLDSPFGYLDVLTEKEIFESCVCKLMANKTRILVTSKMEHLKKADKILILHEGSSYFYGTFSELQSQRPDFSSKLMGYDTFDQFTAERRNSIITETLRRFSLEGDASVSWNETKKQSFKQTGEFGEKRKNSILNSINSIRKFSIVQKTPLQMNGFEEDSGEPLERRLSLVPDSEHGEAILPRSNVINAGPTFQGRRRQSVLNLMTRSSVNQGQSIHRKTATSTRKMSLVPQANLTEIDIYSRRLSQDTGLEISEEINEEDLRECFFDDVESIPTVTTWNTYLRYVTVHKSLIFVLIWCLVVFLAEVAACLVVLCLLKKTSPQDKGNSTKGANNSYAVIITSTSAYYVFYIYVGVADGLLALGLFRGLPLVHTLITVSKILHRKMLHSVLQAPMSTLNTLKAGGILNRFSKDIAVLDDLLPLTIFDFIQLLLIVIGAVAVVSVLKPYIFLATVPVIVAFILLRAYFLHTSQQLKQLESEGRSPIFTHLITSLKGLWTLRAFGRQPYFETLFHKALNLHTANWFLYLSTLRWFQMRIEMIFVIFFIAVTFISILTTGEGEGTVGIILTLAMNIMSTLQWAVNSSIDVDSLMRSVSRVFKFIDMPAEGDQPNRSFKPSKDGQLSKVMIIENQHVKKDDIWPSGGQMTVKDLTAKYVDGGNAVLENISFSISPGQRVGLLGRTGSGKSTLLLAFLRLLNTEGEIQVDGVSWDSITLQQWRKAFGVIPQKVFIFSGTFRKNLDPYGQWNDQEIWKVAEEVGLRSVIEQFPGKLDFVLVDGGCVLSHGHKQLMCLARSVLGKAKILLLDEPSAHLDPITYQIIRRTLKQAFADCTVILSEHRIEAMLECQRFLVIEENKVRQYDSIQRLLSEKSLFRQAISPLDRLKLLPHRNSSKQRSRSKIAALKEETEEEVQETRL</sequence>
<dbReference type="EC" id="5.6.1.6" evidence="1"/>
<dbReference type="EMBL" id="AY585334">
    <property type="protein sequence ID" value="AAS98211.1"/>
    <property type="molecule type" value="mRNA"/>
</dbReference>
<dbReference type="EMBL" id="DP000017">
    <property type="protein sequence ID" value="AAR16305.1"/>
    <property type="molecule type" value="Genomic_DNA"/>
</dbReference>
<dbReference type="RefSeq" id="NP_001098420.1">
    <property type="nucleotide sequence ID" value="NM_001104950.1"/>
</dbReference>
<dbReference type="SMR" id="Q6PQZ2"/>
<dbReference type="FunCoup" id="Q6PQZ2">
    <property type="interactions" value="191"/>
</dbReference>
<dbReference type="STRING" id="9823.ENSSSCP00000036792"/>
<dbReference type="GlyCosmos" id="Q6PQZ2">
    <property type="glycosylation" value="2 sites, No reported glycans"/>
</dbReference>
<dbReference type="GlyGen" id="Q6PQZ2">
    <property type="glycosylation" value="2 sites"/>
</dbReference>
<dbReference type="PaxDb" id="9823-ENSSSCP00000017611"/>
<dbReference type="GeneID" id="403154"/>
<dbReference type="KEGG" id="ssc:403154"/>
<dbReference type="CTD" id="1080"/>
<dbReference type="eggNOG" id="KOG0054">
    <property type="taxonomic scope" value="Eukaryota"/>
</dbReference>
<dbReference type="InParanoid" id="Q6PQZ2"/>
<dbReference type="OrthoDB" id="6500128at2759"/>
<dbReference type="Proteomes" id="UP000008227">
    <property type="component" value="Unplaced"/>
</dbReference>
<dbReference type="Proteomes" id="UP000314985">
    <property type="component" value="Unplaced"/>
</dbReference>
<dbReference type="Proteomes" id="UP000694570">
    <property type="component" value="Unplaced"/>
</dbReference>
<dbReference type="Proteomes" id="UP000694571">
    <property type="component" value="Unplaced"/>
</dbReference>
<dbReference type="Proteomes" id="UP000694720">
    <property type="component" value="Unplaced"/>
</dbReference>
<dbReference type="Proteomes" id="UP000694722">
    <property type="component" value="Unplaced"/>
</dbReference>
<dbReference type="Proteomes" id="UP000694723">
    <property type="component" value="Unplaced"/>
</dbReference>
<dbReference type="Proteomes" id="UP000694724">
    <property type="component" value="Unplaced"/>
</dbReference>
<dbReference type="Proteomes" id="UP000694725">
    <property type="component" value="Unplaced"/>
</dbReference>
<dbReference type="Proteomes" id="UP000694726">
    <property type="component" value="Unplaced"/>
</dbReference>
<dbReference type="Proteomes" id="UP000694727">
    <property type="component" value="Unplaced"/>
</dbReference>
<dbReference type="Proteomes" id="UP000694728">
    <property type="component" value="Unplaced"/>
</dbReference>
<dbReference type="GO" id="GO:0016324">
    <property type="term" value="C:apical plasma membrane"/>
    <property type="evidence" value="ECO:0000250"/>
    <property type="project" value="UniProtKB"/>
</dbReference>
<dbReference type="GO" id="GO:0034707">
    <property type="term" value="C:chloride channel complex"/>
    <property type="evidence" value="ECO:0007669"/>
    <property type="project" value="UniProtKB-KW"/>
</dbReference>
<dbReference type="GO" id="GO:0005829">
    <property type="term" value="C:cytosol"/>
    <property type="evidence" value="ECO:0000318"/>
    <property type="project" value="GO_Central"/>
</dbReference>
<dbReference type="GO" id="GO:0005769">
    <property type="term" value="C:early endosome"/>
    <property type="evidence" value="ECO:0000250"/>
    <property type="project" value="UniProtKB"/>
</dbReference>
<dbReference type="GO" id="GO:0031901">
    <property type="term" value="C:early endosome membrane"/>
    <property type="evidence" value="ECO:0007669"/>
    <property type="project" value="UniProtKB-SubCell"/>
</dbReference>
<dbReference type="GO" id="GO:0005789">
    <property type="term" value="C:endoplasmic reticulum membrane"/>
    <property type="evidence" value="ECO:0000250"/>
    <property type="project" value="UniProtKB"/>
</dbReference>
<dbReference type="GO" id="GO:0016020">
    <property type="term" value="C:membrane"/>
    <property type="evidence" value="ECO:0000250"/>
    <property type="project" value="UniProtKB"/>
</dbReference>
<dbReference type="GO" id="GO:0005634">
    <property type="term" value="C:nucleus"/>
    <property type="evidence" value="ECO:0000250"/>
    <property type="project" value="UniProtKB"/>
</dbReference>
<dbReference type="GO" id="GO:0005886">
    <property type="term" value="C:plasma membrane"/>
    <property type="evidence" value="ECO:0000250"/>
    <property type="project" value="UniProtKB"/>
</dbReference>
<dbReference type="GO" id="GO:0055038">
    <property type="term" value="C:recycling endosome membrane"/>
    <property type="evidence" value="ECO:0007669"/>
    <property type="project" value="UniProtKB-SubCell"/>
</dbReference>
<dbReference type="GO" id="GO:0140359">
    <property type="term" value="F:ABC-type transporter activity"/>
    <property type="evidence" value="ECO:0007669"/>
    <property type="project" value="InterPro"/>
</dbReference>
<dbReference type="GO" id="GO:0005524">
    <property type="term" value="F:ATP binding"/>
    <property type="evidence" value="ECO:0007669"/>
    <property type="project" value="UniProtKB-KW"/>
</dbReference>
<dbReference type="GO" id="GO:0016887">
    <property type="term" value="F:ATP hydrolysis activity"/>
    <property type="evidence" value="ECO:0000250"/>
    <property type="project" value="UniProtKB"/>
</dbReference>
<dbReference type="GO" id="GO:0042626">
    <property type="term" value="F:ATPase-coupled transmembrane transporter activity"/>
    <property type="evidence" value="ECO:0000318"/>
    <property type="project" value="GO_Central"/>
</dbReference>
<dbReference type="GO" id="GO:0015106">
    <property type="term" value="F:bicarbonate transmembrane transporter activity"/>
    <property type="evidence" value="ECO:0000250"/>
    <property type="project" value="UniProtKB"/>
</dbReference>
<dbReference type="GO" id="GO:0005254">
    <property type="term" value="F:chloride channel activity"/>
    <property type="evidence" value="ECO:0000250"/>
    <property type="project" value="UniProtKB"/>
</dbReference>
<dbReference type="GO" id="GO:0019869">
    <property type="term" value="F:chloride channel inhibitor activity"/>
    <property type="evidence" value="ECO:0000250"/>
    <property type="project" value="UniProtKB"/>
</dbReference>
<dbReference type="GO" id="GO:0015108">
    <property type="term" value="F:chloride transmembrane transporter activity"/>
    <property type="evidence" value="ECO:0000250"/>
    <property type="project" value="UniProtKB"/>
</dbReference>
<dbReference type="GO" id="GO:0005260">
    <property type="term" value="F:intracellularly ATP-gated chloride channel activity"/>
    <property type="evidence" value="ECO:0000250"/>
    <property type="project" value="UniProtKB"/>
</dbReference>
<dbReference type="GO" id="GO:0015701">
    <property type="term" value="P:bicarbonate transport"/>
    <property type="evidence" value="ECO:0000250"/>
    <property type="project" value="UniProtKB"/>
</dbReference>
<dbReference type="GO" id="GO:0071320">
    <property type="term" value="P:cellular response to cAMP"/>
    <property type="evidence" value="ECO:0000250"/>
    <property type="project" value="UniProtKB"/>
</dbReference>
<dbReference type="GO" id="GO:1904322">
    <property type="term" value="P:cellular response to forskolin"/>
    <property type="evidence" value="ECO:0000250"/>
    <property type="project" value="UniProtKB"/>
</dbReference>
<dbReference type="GO" id="GO:1902476">
    <property type="term" value="P:chloride transmembrane transport"/>
    <property type="evidence" value="ECO:0000250"/>
    <property type="project" value="UniProtKB"/>
</dbReference>
<dbReference type="GO" id="GO:0051454">
    <property type="term" value="P:intracellular pH elevation"/>
    <property type="evidence" value="ECO:0000250"/>
    <property type="project" value="UniProtKB"/>
</dbReference>
<dbReference type="GO" id="GO:0060081">
    <property type="term" value="P:membrane hyperpolarization"/>
    <property type="evidence" value="ECO:0000250"/>
    <property type="project" value="UniProtKB"/>
</dbReference>
<dbReference type="GO" id="GO:0050891">
    <property type="term" value="P:multicellular organismal-level water homeostasis"/>
    <property type="evidence" value="ECO:0000250"/>
    <property type="project" value="UniProtKB"/>
</dbReference>
<dbReference type="GO" id="GO:0034976">
    <property type="term" value="P:response to endoplasmic reticulum stress"/>
    <property type="evidence" value="ECO:0000250"/>
    <property type="project" value="UniProtKB"/>
</dbReference>
<dbReference type="GO" id="GO:0048240">
    <property type="term" value="P:sperm capacitation"/>
    <property type="evidence" value="ECO:0000250"/>
    <property type="project" value="UniProtKB"/>
</dbReference>
<dbReference type="GO" id="GO:0035377">
    <property type="term" value="P:transepithelial water transport"/>
    <property type="evidence" value="ECO:0000250"/>
    <property type="project" value="UniProtKB"/>
</dbReference>
<dbReference type="CDD" id="cd18594">
    <property type="entry name" value="ABC_6TM_CFTR_D1"/>
    <property type="match status" value="1"/>
</dbReference>
<dbReference type="CDD" id="cd18600">
    <property type="entry name" value="ABC_6TM_CFTR_D2"/>
    <property type="match status" value="1"/>
</dbReference>
<dbReference type="CDD" id="cd03291">
    <property type="entry name" value="ABCC_CFTR1"/>
    <property type="match status" value="1"/>
</dbReference>
<dbReference type="FunFam" id="1.20.1560.10:FF:000017">
    <property type="entry name" value="Cystic fibrosis transmembrane conductance regulator"/>
    <property type="match status" value="1"/>
</dbReference>
<dbReference type="FunFam" id="1.20.1560.10:FF:000019">
    <property type="entry name" value="Cystic fibrosis transmembrane conductance regulator"/>
    <property type="match status" value="1"/>
</dbReference>
<dbReference type="FunFam" id="3.40.50.300:FF:000581">
    <property type="entry name" value="Cystic fibrosis transmembrane conductance regulator"/>
    <property type="match status" value="1"/>
</dbReference>
<dbReference type="FunFam" id="3.40.50.300:FF:000591">
    <property type="entry name" value="Cystic fibrosis transmembrane conductance regulator"/>
    <property type="match status" value="1"/>
</dbReference>
<dbReference type="Gene3D" id="1.20.1560.10">
    <property type="entry name" value="ABC transporter type 1, transmembrane domain"/>
    <property type="match status" value="2"/>
</dbReference>
<dbReference type="Gene3D" id="3.40.50.300">
    <property type="entry name" value="P-loop containing nucleotide triphosphate hydrolases"/>
    <property type="match status" value="2"/>
</dbReference>
<dbReference type="InterPro" id="IPR003593">
    <property type="entry name" value="AAA+_ATPase"/>
</dbReference>
<dbReference type="InterPro" id="IPR011527">
    <property type="entry name" value="ABC1_TM_dom"/>
</dbReference>
<dbReference type="InterPro" id="IPR036640">
    <property type="entry name" value="ABC1_TM_sf"/>
</dbReference>
<dbReference type="InterPro" id="IPR003439">
    <property type="entry name" value="ABC_transporter-like_ATP-bd"/>
</dbReference>
<dbReference type="InterPro" id="IPR017871">
    <property type="entry name" value="ABC_transporter-like_CS"/>
</dbReference>
<dbReference type="InterPro" id="IPR050173">
    <property type="entry name" value="ABC_transporter_C-like"/>
</dbReference>
<dbReference type="InterPro" id="IPR009147">
    <property type="entry name" value="CFTR/ABCC7"/>
</dbReference>
<dbReference type="InterPro" id="IPR047082">
    <property type="entry name" value="CFTR1_ATP-bd_dom1"/>
</dbReference>
<dbReference type="InterPro" id="IPR025837">
    <property type="entry name" value="CFTR_reg_dom"/>
</dbReference>
<dbReference type="InterPro" id="IPR027417">
    <property type="entry name" value="P-loop_NTPase"/>
</dbReference>
<dbReference type="NCBIfam" id="TIGR01271">
    <property type="entry name" value="CFTR_protein"/>
    <property type="match status" value="1"/>
</dbReference>
<dbReference type="PANTHER" id="PTHR24223">
    <property type="entry name" value="ATP-BINDING CASSETTE SUB-FAMILY C"/>
    <property type="match status" value="1"/>
</dbReference>
<dbReference type="PANTHER" id="PTHR24223:SF19">
    <property type="entry name" value="CYSTIC FIBROSIS TRANSMEMBRANE CONDUCTANCE REGULATOR"/>
    <property type="match status" value="1"/>
</dbReference>
<dbReference type="Pfam" id="PF00664">
    <property type="entry name" value="ABC_membrane"/>
    <property type="match status" value="2"/>
</dbReference>
<dbReference type="Pfam" id="PF00005">
    <property type="entry name" value="ABC_tran"/>
    <property type="match status" value="2"/>
</dbReference>
<dbReference type="Pfam" id="PF14396">
    <property type="entry name" value="CFTR_R"/>
    <property type="match status" value="1"/>
</dbReference>
<dbReference type="PRINTS" id="PR01851">
    <property type="entry name" value="CYSFIBREGLTR"/>
</dbReference>
<dbReference type="SMART" id="SM00382">
    <property type="entry name" value="AAA"/>
    <property type="match status" value="2"/>
</dbReference>
<dbReference type="SUPFAM" id="SSF90123">
    <property type="entry name" value="ABC transporter transmembrane region"/>
    <property type="match status" value="2"/>
</dbReference>
<dbReference type="SUPFAM" id="SSF52540">
    <property type="entry name" value="P-loop containing nucleoside triphosphate hydrolases"/>
    <property type="match status" value="2"/>
</dbReference>
<dbReference type="PROSITE" id="PS50929">
    <property type="entry name" value="ABC_TM1F"/>
    <property type="match status" value="2"/>
</dbReference>
<dbReference type="PROSITE" id="PS00211">
    <property type="entry name" value="ABC_TRANSPORTER_1"/>
    <property type="match status" value="1"/>
</dbReference>
<dbReference type="PROSITE" id="PS50893">
    <property type="entry name" value="ABC_TRANSPORTER_2"/>
    <property type="match status" value="2"/>
</dbReference>
<evidence type="ECO:0000250" key="1">
    <source>
        <dbReference type="UniProtKB" id="P13569"/>
    </source>
</evidence>
<evidence type="ECO:0000250" key="2">
    <source>
        <dbReference type="UniProtKB" id="P26361"/>
    </source>
</evidence>
<evidence type="ECO:0000250" key="3">
    <source>
        <dbReference type="UniProtKB" id="P34158"/>
    </source>
</evidence>
<evidence type="ECO:0000255" key="4"/>
<evidence type="ECO:0000255" key="5">
    <source>
        <dbReference type="PROSITE-ProRule" id="PRU00434"/>
    </source>
</evidence>
<evidence type="ECO:0000255" key="6">
    <source>
        <dbReference type="PROSITE-ProRule" id="PRU00441"/>
    </source>
</evidence>
<evidence type="ECO:0000256" key="7">
    <source>
        <dbReference type="SAM" id="MobiDB-lite"/>
    </source>
</evidence>
<evidence type="ECO:0000269" key="8">
    <source>
    </source>
</evidence>
<evidence type="ECO:0000305" key="9"/>
<accession>Q6PQZ2</accession>
<accession>Q2QLD5</accession>
<keyword id="KW-0067">ATP-binding</keyword>
<keyword id="KW-1003">Cell membrane</keyword>
<keyword id="KW-0868">Chloride</keyword>
<keyword id="KW-0869">Chloride channel</keyword>
<keyword id="KW-0256">Endoplasmic reticulum</keyword>
<keyword id="KW-0967">Endosome</keyword>
<keyword id="KW-0325">Glycoprotein</keyword>
<keyword id="KW-0407">Ion channel</keyword>
<keyword id="KW-0406">Ion transport</keyword>
<keyword id="KW-0413">Isomerase</keyword>
<keyword id="KW-1017">Isopeptide bond</keyword>
<keyword id="KW-0449">Lipoprotein</keyword>
<keyword id="KW-0472">Membrane</keyword>
<keyword id="KW-0547">Nucleotide-binding</keyword>
<keyword id="KW-0539">Nucleus</keyword>
<keyword id="KW-0564">Palmitate</keyword>
<keyword id="KW-0597">Phosphoprotein</keyword>
<keyword id="KW-1185">Reference proteome</keyword>
<keyword id="KW-0677">Repeat</keyword>
<keyword id="KW-0812">Transmembrane</keyword>
<keyword id="KW-1133">Transmembrane helix</keyword>
<keyword id="KW-0813">Transport</keyword>
<keyword id="KW-0832">Ubl conjugation</keyword>
<reference key="1">
    <citation type="submission" date="2004-03" db="EMBL/GenBank/DDBJ databases">
        <title>Cloning and functional analysis of porcine cystic fibrosis transmembrane conductance regulator.</title>
        <authorList>
            <person name="Wang Y."/>
            <person name="Yang H."/>
            <person name="Gao H."/>
            <person name="He C."/>
            <person name="Ma T."/>
        </authorList>
    </citation>
    <scope>NUCLEOTIDE SEQUENCE [MRNA]</scope>
    <source>
        <tissue>Small intestine</tissue>
    </source>
</reference>
<reference key="2">
    <citation type="journal article" date="2003" name="Nature">
        <title>Comparative analyses of multi-species sequences from targeted genomic regions.</title>
        <authorList>
            <person name="Thomas J.W."/>
            <person name="Touchman J.W."/>
            <person name="Blakesley R.W."/>
            <person name="Bouffard G.G."/>
            <person name="Beckstrom-Sternberg S.M."/>
            <person name="Margulies E.H."/>
            <person name="Blanchette M."/>
            <person name="Siepel A.C."/>
            <person name="Thomas P.J."/>
            <person name="McDowell J.C."/>
            <person name="Maskeri B."/>
            <person name="Hansen N.F."/>
            <person name="Schwartz M.S."/>
            <person name="Weber R.J."/>
            <person name="Kent W.J."/>
            <person name="Karolchik D."/>
            <person name="Bruen T.C."/>
            <person name="Bevan R."/>
            <person name="Cutler D.J."/>
            <person name="Schwartz S."/>
            <person name="Elnitski L."/>
            <person name="Idol J.R."/>
            <person name="Prasad A.B."/>
            <person name="Lee-Lin S.-Q."/>
            <person name="Maduro V.V.B."/>
            <person name="Summers T.J."/>
            <person name="Portnoy M.E."/>
            <person name="Dietrich N.L."/>
            <person name="Akhter N."/>
            <person name="Ayele K."/>
            <person name="Benjamin B."/>
            <person name="Cariaga K."/>
            <person name="Brinkley C.P."/>
            <person name="Brooks S.Y."/>
            <person name="Granite S."/>
            <person name="Guan X."/>
            <person name="Gupta J."/>
            <person name="Haghighi P."/>
            <person name="Ho S.-L."/>
            <person name="Huang M.C."/>
            <person name="Karlins E."/>
            <person name="Laric P.L."/>
            <person name="Legaspi R."/>
            <person name="Lim M.J."/>
            <person name="Maduro Q.L."/>
            <person name="Masiello C.A."/>
            <person name="Mastrian S.D."/>
            <person name="McCloskey J.C."/>
            <person name="Pearson R."/>
            <person name="Stantripop S."/>
            <person name="Tiongson E.E."/>
            <person name="Tran J.T."/>
            <person name="Tsurgeon C."/>
            <person name="Vogt J.L."/>
            <person name="Walker M.A."/>
            <person name="Wetherby K.D."/>
            <person name="Wiggins L.S."/>
            <person name="Young A.C."/>
            <person name="Zhang L.-H."/>
            <person name="Osoegawa K."/>
            <person name="Zhu B."/>
            <person name="Zhao B."/>
            <person name="Shu C.L."/>
            <person name="De Jong P.J."/>
            <person name="Lawrence C.E."/>
            <person name="Smit A.F."/>
            <person name="Chakravarti A."/>
            <person name="Haussler D."/>
            <person name="Green P."/>
            <person name="Miller W."/>
            <person name="Green E.D."/>
        </authorList>
    </citation>
    <scope>NUCLEOTIDE SEQUENCE [LARGE SCALE GENOMIC DNA]</scope>
</reference>
<reference key="3">
    <citation type="journal article" date="2016" name="Science">
        <title>Airway acidification initiates host defense abnormalities in cystic fibrosis mice.</title>
        <authorList>
            <person name="Shah V.S."/>
            <person name="Meyerholz D.K."/>
            <person name="Tang X.X."/>
            <person name="Reznikov L."/>
            <person name="Abou Alaiwa M."/>
            <person name="Ernst S.E."/>
            <person name="Karp P.H."/>
            <person name="Wohlford-Lenane C.L."/>
            <person name="Heilmann K.P."/>
            <person name="Leidinger M.R."/>
            <person name="Allen P.D."/>
            <person name="Zabner J."/>
            <person name="McCray P.B. Jr."/>
            <person name="Ostedgaard L.S."/>
            <person name="Stoltz D.A."/>
            <person name="Randak C.O."/>
            <person name="Welsh M.J."/>
        </authorList>
    </citation>
    <scope>FUNCTION</scope>
</reference>
<comment type="function">
    <text evidence="1 2 8">Epithelial ion channel that plays an important role in the regulation of epithelial ion and water transport and fluid homeostasis (PubMed:26823428). Mediates the transport of chloride ions across the cell membrane (By similarity). Possesses an intrinsic ATPase activity and utilizes ATP to gate its channel; the passive flow of anions through the channel is gated by cycles of ATP binding and hydrolysis by the ATP-binding domains (By similarity). The ion channel is also permeable to HCO(3)(-); selectivity depends on the extracellular chloride concentration. Exerts its function also by modulating the activity of other ion channels and transporters. Contributes to the regulation of the pH and the ion content of the epithelial fluid layer (PubMed:26823428). Modulates the activity of the epithelial sodium channel (ENaC) complex, in part by regulating the cell surface expression of the ENaC complex. May regulate bicarbonate secretion and salvage in epithelial cells by regulating the transporter SLC4A7. Can inhibit the chloride channel activity of ANO1 (By similarity). Plays a role in the chloride and bicarbonate homeostasis during sperm epididymal maturation and capacitation (By similarity).</text>
</comment>
<comment type="catalytic activity">
    <reaction evidence="1">
        <text>ATP + H2O + closed Cl(-) channel = ADP + phosphate + open Cl(-) channel.</text>
        <dbReference type="EC" id="5.6.1.6"/>
    </reaction>
</comment>
<comment type="catalytic activity">
    <reaction evidence="1">
        <text>chloride(in) = chloride(out)</text>
        <dbReference type="Rhea" id="RHEA:29823"/>
        <dbReference type="ChEBI" id="CHEBI:17996"/>
    </reaction>
</comment>
<comment type="catalytic activity">
    <reaction evidence="1">
        <text>hydrogencarbonate(in) = hydrogencarbonate(out)</text>
        <dbReference type="Rhea" id="RHEA:28695"/>
        <dbReference type="ChEBI" id="CHEBI:17544"/>
    </reaction>
</comment>
<comment type="catalytic activity">
    <reaction evidence="1">
        <text>ATP + H2O = ADP + phosphate + H(+)</text>
        <dbReference type="Rhea" id="RHEA:13065"/>
        <dbReference type="ChEBI" id="CHEBI:15377"/>
        <dbReference type="ChEBI" id="CHEBI:15378"/>
        <dbReference type="ChEBI" id="CHEBI:30616"/>
        <dbReference type="ChEBI" id="CHEBI:43474"/>
        <dbReference type="ChEBI" id="CHEBI:456216"/>
    </reaction>
    <physiologicalReaction direction="left-to-right" evidence="1">
        <dbReference type="Rhea" id="RHEA:13066"/>
    </physiologicalReaction>
</comment>
<comment type="subunit">
    <text evidence="1 2 3">Monomer; does not require oligomerization for channel activity. May form oligomers in the membrane (By similarity). Interacts with SLC26A3, SLC26A6 and NHERF1 (By similarity). Interacts with SHANK2 (By similarity). Interacts with MYO6 (By similarity). Interacts (via C-terminus) with GOPC (via PDZ domain); this promotes CFTR internalization and thereby decreases channel activity. Interacts with SLC4A7 through NHERF1. Found in a complex with MYO5B and RAB11A. Interacts with ANO1. Interacts with SLC26A8 (By similarity). Interacts with AHCYL1; the interaction increases CFTR activity (By similarity). Interacts with CSE1L (By similarity). The core-glycosylated form interacts with GORASP2 (via PDZ GRASP-type 1 domain) in respone to ER stress (By similarity). Interacts with MARCHF2; the interaction leads to CFTR ubiqtuitination and degradation (By similarity). Interacts with ADGRG2 (By similarity).</text>
</comment>
<comment type="subcellular location">
    <subcellularLocation>
        <location evidence="2">Apical cell membrane</location>
        <topology evidence="1">Multi-pass membrane protein</topology>
    </subcellularLocation>
    <subcellularLocation>
        <location evidence="1">Early endosome membrane</location>
        <topology evidence="1">Multi-pass membrane protein</topology>
    </subcellularLocation>
    <subcellularLocation>
        <location evidence="2">Cell membrane</location>
        <topology evidence="1">Multi-pass membrane protein</topology>
    </subcellularLocation>
    <subcellularLocation>
        <location evidence="1">Recycling endosome membrane</location>
        <topology evidence="1">Multi-pass membrane protein</topology>
    </subcellularLocation>
    <subcellularLocation>
        <location evidence="1">Endoplasmic reticulum membrane</location>
        <topology evidence="1">Multi-pass membrane protein</topology>
    </subcellularLocation>
    <subcellularLocation>
        <location evidence="3">Nucleus</location>
    </subcellularLocation>
    <text evidence="1 3">The channel is internalized from the cell surface into an endosomal recycling compartment, from where it is recycled to the cell membrane. In the oviduct and bronchus, detected on the apical side of epithelial cells, but not associated with cilia. In Sertoli cells, a processed product is detected in the nucleus. ER stress induces GORASP2-mediated unconventional (ER/Golgi-independent) trafficking of core-glycosylated CFTR to cell membrane.</text>
</comment>
<comment type="domain">
    <text evidence="1 2">Binds and hydrolyzes ATP via the two cytoplasmic ABC transporter nucleotide-binding domains. The two ATP-binding domains interact with each other, forming a head-to-tail dimer. Normal ATPase activity requires interaction between the two domains. The first ABC transporter nucleotide-binding domain has no ATPase activity by itself.</text>
</comment>
<comment type="domain">
    <text evidence="1">The PDZ-binding motif mediates interactions with GOPC and with the SLC4A7, NHERF1/EBP50 complex.</text>
</comment>
<comment type="domain">
    <text evidence="1">The disordered R region mediates channel activation when it is phosphorylated, but not in the absence of phosphorylation.</text>
</comment>
<comment type="PTM">
    <text evidence="1">N-glycosylated.</text>
</comment>
<comment type="PTM">
    <text evidence="1">Phosphorylated; cAMP treatment promotes phosphorylation and activates the channel. Dephosphorylation decreases the ATPase activity (in vitro). Phosphorylation at PKA sites activates the channel. Phosphorylation at PKC sites enhances the response to phosphorylation by PKA. Phosphorylated by AMPK; this inhibits channel activity.</text>
</comment>
<comment type="PTM">
    <text evidence="1">Ubiquitinated, leading to its degradation in the lysosome. Deubiquitination by USP10 in early endosomes enhances its endocytic recycling to the cell membrane. Ubiquitinated by RNF185 during ER stress. Ubiquitinated by MARCHF2 (By similarity).</text>
</comment>
<comment type="similarity">
    <text evidence="9">Belongs to the ABC transporter superfamily. ABCC family. CFTR transporter (TC 3.A.1.202) subfamily.</text>
</comment>
<name>CFTR_PIG</name>
<gene>
    <name evidence="1" type="primary">CFTR</name>
    <name type="synonym">ABCC7</name>
</gene>